<protein>
    <recommendedName>
        <fullName>Lombricine kinase</fullName>
        <shortName>LK</shortName>
        <ecNumber>2.7.3.5</ecNumber>
    </recommendedName>
</protein>
<proteinExistence type="evidence at protein level"/>
<feature type="chain" id="PRO_0000211986" description="Lombricine kinase">
    <location>
        <begin position="1" status="less than"/>
        <end position="15" status="greater than"/>
    </location>
</feature>
<feature type="non-terminal residue">
    <location>
        <position position="1"/>
    </location>
</feature>
<feature type="non-terminal residue">
    <location>
        <position position="15"/>
    </location>
</feature>
<accession>P11918</accession>
<sequence length="15" mass="1565">LGYITCPGSNLGTLR</sequence>
<name>KLOM_LUMTE</name>
<dbReference type="EC" id="2.7.3.5"/>
<dbReference type="PIR" id="A08416">
    <property type="entry name" value="A08416"/>
</dbReference>
<dbReference type="GO" id="GO:0005524">
    <property type="term" value="F:ATP binding"/>
    <property type="evidence" value="ECO:0007669"/>
    <property type="project" value="UniProtKB-KW"/>
</dbReference>
<dbReference type="GO" id="GO:0050059">
    <property type="term" value="F:lombricine kinase activity"/>
    <property type="evidence" value="ECO:0007669"/>
    <property type="project" value="UniProtKB-EC"/>
</dbReference>
<dbReference type="PROSITE" id="PS00112">
    <property type="entry name" value="PHOSPHAGEN_KINASE"/>
    <property type="match status" value="1"/>
</dbReference>
<comment type="catalytic activity">
    <reaction>
        <text>L-lombricine + ATP = N-phospho-L-lombricine + ADP + H(+)</text>
        <dbReference type="Rhea" id="RHEA:23292"/>
        <dbReference type="ChEBI" id="CHEBI:15378"/>
        <dbReference type="ChEBI" id="CHEBI:30616"/>
        <dbReference type="ChEBI" id="CHEBI:57825"/>
        <dbReference type="ChEBI" id="CHEBI:58356"/>
        <dbReference type="ChEBI" id="CHEBI:456216"/>
        <dbReference type="EC" id="2.7.3.5"/>
    </reaction>
</comment>
<comment type="subunit">
    <text>Homodimer.</text>
</comment>
<comment type="similarity">
    <text evidence="1">Belongs to the ATP:guanido phosphotransferase family.</text>
</comment>
<reference key="1">
    <citation type="journal article" date="1971" name="Eur. J. Biochem.">
        <title>Comparative structural studies of the active site of ATP: guanidine phosphotransferases. The essential cysteine tryptic peptide of lombricine kinase from Lumbricus terrestris muscle.</title>
        <authorList>
            <person name="der Terrossian E."/>
            <person name="Desvages G."/>
            <person name="Pradel L.A."/>
            <person name="Kassab R."/>
            <person name="van Thoai N."/>
        </authorList>
    </citation>
    <scope>PROTEIN SEQUENCE</scope>
</reference>
<organism>
    <name type="scientific">Lumbricus terrestris</name>
    <name type="common">Common earthworm</name>
    <dbReference type="NCBI Taxonomy" id="6398"/>
    <lineage>
        <taxon>Eukaryota</taxon>
        <taxon>Metazoa</taxon>
        <taxon>Spiralia</taxon>
        <taxon>Lophotrochozoa</taxon>
        <taxon>Annelida</taxon>
        <taxon>Clitellata</taxon>
        <taxon>Oligochaeta</taxon>
        <taxon>Crassiclitellata</taxon>
        <taxon>Lumbricina</taxon>
        <taxon>Lumbricidae</taxon>
        <taxon>Lumbricinae</taxon>
        <taxon>Lumbricus</taxon>
    </lineage>
</organism>
<keyword id="KW-0067">ATP-binding</keyword>
<keyword id="KW-0903">Direct protein sequencing</keyword>
<keyword id="KW-0418">Kinase</keyword>
<keyword id="KW-0547">Nucleotide-binding</keyword>
<keyword id="KW-0808">Transferase</keyword>
<evidence type="ECO:0000305" key="1"/>